<name>PSBU_TRIEI</name>
<comment type="function">
    <text evidence="1">One of the extrinsic, lumenal subunits of photosystem II (PSII). PSII is a light-driven water plastoquinone oxidoreductase, using light energy to abstract electrons from H(2)O, generating a proton gradient subsequently used for ATP formation. The extrinsic proteins stabilize the structure of photosystem II oxygen-evolving complex (OEC), the ion environment of oxygen evolution and protect the OEC against heat-induced inactivation.</text>
</comment>
<comment type="subunit">
    <text evidence="1">PSII is composed of 1 copy each of membrane proteins PsbA, PsbB, PsbC, PsbD, PsbE, PsbF, PsbH, PsbI, PsbJ, PsbK, PsbL, PsbM, PsbT, PsbX, PsbY, PsbZ, Psb30/Ycf12, peripheral proteins PsbO, CyanoQ (PsbQ), PsbU, PsbV and a large number of cofactors. It forms dimeric complexes.</text>
</comment>
<comment type="subcellular location">
    <subcellularLocation>
        <location evidence="1">Cellular thylakoid membrane</location>
        <topology evidence="1">Peripheral membrane protein</topology>
        <orientation evidence="1">Lumenal side</orientation>
    </subcellularLocation>
</comment>
<comment type="similarity">
    <text evidence="1">Belongs to the PsbU family.</text>
</comment>
<evidence type="ECO:0000255" key="1">
    <source>
        <dbReference type="HAMAP-Rule" id="MF_00589"/>
    </source>
</evidence>
<dbReference type="EMBL" id="CP000393">
    <property type="protein sequence ID" value="ABG53747.1"/>
    <property type="molecule type" value="Genomic_DNA"/>
</dbReference>
<dbReference type="RefSeq" id="WP_011614061.1">
    <property type="nucleotide sequence ID" value="NC_008312.1"/>
</dbReference>
<dbReference type="SMR" id="Q10VH7"/>
<dbReference type="STRING" id="203124.Tery_4796"/>
<dbReference type="KEGG" id="ter:Tery_4796"/>
<dbReference type="eggNOG" id="COG1555">
    <property type="taxonomic scope" value="Bacteria"/>
</dbReference>
<dbReference type="HOGENOM" id="CLU_141240_1_0_3"/>
<dbReference type="OrthoDB" id="463369at2"/>
<dbReference type="GO" id="GO:0019898">
    <property type="term" value="C:extrinsic component of membrane"/>
    <property type="evidence" value="ECO:0007669"/>
    <property type="project" value="InterPro"/>
</dbReference>
<dbReference type="GO" id="GO:0009654">
    <property type="term" value="C:photosystem II oxygen evolving complex"/>
    <property type="evidence" value="ECO:0007669"/>
    <property type="project" value="InterPro"/>
</dbReference>
<dbReference type="GO" id="GO:0031676">
    <property type="term" value="C:plasma membrane-derived thylakoid membrane"/>
    <property type="evidence" value="ECO:0007669"/>
    <property type="project" value="UniProtKB-SubCell"/>
</dbReference>
<dbReference type="GO" id="GO:0015979">
    <property type="term" value="P:photosynthesis"/>
    <property type="evidence" value="ECO:0007669"/>
    <property type="project" value="UniProtKB-UniRule"/>
</dbReference>
<dbReference type="GO" id="GO:0042549">
    <property type="term" value="P:photosystem II stabilization"/>
    <property type="evidence" value="ECO:0007669"/>
    <property type="project" value="InterPro"/>
</dbReference>
<dbReference type="Gene3D" id="1.10.150.320">
    <property type="entry name" value="Photosystem II 12 kDa extrinsic protein"/>
    <property type="match status" value="1"/>
</dbReference>
<dbReference type="HAMAP" id="MF_00589">
    <property type="entry name" value="PSII_PsbU"/>
    <property type="match status" value="1"/>
</dbReference>
<dbReference type="InterPro" id="IPR010527">
    <property type="entry name" value="PSII_PsbU"/>
</dbReference>
<dbReference type="NCBIfam" id="NF002708">
    <property type="entry name" value="PRK02515.1"/>
    <property type="match status" value="1"/>
</dbReference>
<dbReference type="Pfam" id="PF06514">
    <property type="entry name" value="PsbU"/>
    <property type="match status" value="1"/>
</dbReference>
<dbReference type="SUPFAM" id="SSF81585">
    <property type="entry name" value="PsbU/PolX domain-like"/>
    <property type="match status" value="1"/>
</dbReference>
<accession>Q10VH7</accession>
<protein>
    <recommendedName>
        <fullName evidence="1">Photosystem II extrinsic protein U</fullName>
        <shortName evidence="1">PSII-U</shortName>
        <shortName evidence="1">PsbU</shortName>
    </recommendedName>
    <alternativeName>
        <fullName evidence="1">Photosystem II 12 kDa extrinsic protein</fullName>
        <shortName evidence="1">PS II complex 12 kDa extrinsic protein</shortName>
    </alternativeName>
</protein>
<sequence>MKKIGLLLTIFSLCLGCLGLVPSDKAHAGNLNLTTWPSASILAVESRTVNNADKKLGEIGEKLDLNNSPLRSFRKYRGMFPTIAAQIVDNAPYEKVEDVLEMPGLTEEQKKLLEANLKNFTVTKTADVYNEGDYRLNTGSYD</sequence>
<gene>
    <name evidence="1" type="primary">psbU</name>
    <name type="ordered locus">Tery_4796</name>
</gene>
<keyword id="KW-0249">Electron transport</keyword>
<keyword id="KW-0472">Membrane</keyword>
<keyword id="KW-0602">Photosynthesis</keyword>
<keyword id="KW-0604">Photosystem II</keyword>
<keyword id="KW-0732">Signal</keyword>
<keyword id="KW-0793">Thylakoid</keyword>
<keyword id="KW-0813">Transport</keyword>
<feature type="signal peptide" evidence="1">
    <location>
        <begin position="1"/>
        <end position="28"/>
    </location>
</feature>
<feature type="chain" id="PRO_5000127127" description="Photosystem II extrinsic protein U">
    <location>
        <begin position="29"/>
        <end position="142"/>
    </location>
</feature>
<organism>
    <name type="scientific">Trichodesmium erythraeum (strain IMS101)</name>
    <dbReference type="NCBI Taxonomy" id="203124"/>
    <lineage>
        <taxon>Bacteria</taxon>
        <taxon>Bacillati</taxon>
        <taxon>Cyanobacteriota</taxon>
        <taxon>Cyanophyceae</taxon>
        <taxon>Oscillatoriophycideae</taxon>
        <taxon>Oscillatoriales</taxon>
        <taxon>Microcoleaceae</taxon>
        <taxon>Trichodesmium</taxon>
    </lineage>
</organism>
<reference key="1">
    <citation type="journal article" date="2015" name="Proc. Natl. Acad. Sci. U.S.A.">
        <title>Trichodesmium genome maintains abundant, widespread noncoding DNA in situ, despite oligotrophic lifestyle.</title>
        <authorList>
            <person name="Walworth N."/>
            <person name="Pfreundt U."/>
            <person name="Nelson W.C."/>
            <person name="Mincer T."/>
            <person name="Heidelberg J.F."/>
            <person name="Fu F."/>
            <person name="Waterbury J.B."/>
            <person name="Glavina del Rio T."/>
            <person name="Goodwin L."/>
            <person name="Kyrpides N.C."/>
            <person name="Land M.L."/>
            <person name="Woyke T."/>
            <person name="Hutchins D.A."/>
            <person name="Hess W.R."/>
            <person name="Webb E.A."/>
        </authorList>
    </citation>
    <scope>NUCLEOTIDE SEQUENCE [LARGE SCALE GENOMIC DNA]</scope>
    <source>
        <strain>IMS101</strain>
    </source>
</reference>
<proteinExistence type="inferred from homology"/>